<keyword id="KW-0046">Antibiotic resistance</keyword>
<keyword id="KW-0067">ATP-binding</keyword>
<keyword id="KW-0997">Cell inner membrane</keyword>
<keyword id="KW-1003">Cell membrane</keyword>
<keyword id="KW-0472">Membrane</keyword>
<keyword id="KW-0547">Nucleotide-binding</keyword>
<keyword id="KW-1185">Reference proteome</keyword>
<keyword id="KW-1278">Translocase</keyword>
<keyword id="KW-0812">Transmembrane</keyword>
<keyword id="KW-1133">Transmembrane helix</keyword>
<keyword id="KW-0813">Transport</keyword>
<evidence type="ECO:0000255" key="1">
    <source>
        <dbReference type="HAMAP-Rule" id="MF_01720"/>
    </source>
</evidence>
<evidence type="ECO:0000305" key="2"/>
<reference key="1">
    <citation type="journal article" date="2005" name="Infect. Immun.">
        <title>Whole-genome analyses of speciation events in pathogenic Brucellae.</title>
        <authorList>
            <person name="Chain P.S."/>
            <person name="Comerci D.J."/>
            <person name="Tolmasky M.E."/>
            <person name="Larimer F.W."/>
            <person name="Malfatti S.A."/>
            <person name="Vergez L.M."/>
            <person name="Aguero F."/>
            <person name="Land M.L."/>
            <person name="Ugalde R.A."/>
            <person name="Garcia E."/>
        </authorList>
    </citation>
    <scope>NUCLEOTIDE SEQUENCE [LARGE SCALE GENOMIC DNA]</scope>
    <source>
        <strain>2308</strain>
    </source>
</reference>
<gene>
    <name evidence="1" type="primary">macB</name>
    <name type="ordered locus">BAB1_1683/BAB1_1684</name>
</gene>
<sequence length="646" mass="68958">MAGAPLIRLEDICKTFHNGDLAVEVLHGITLDIRAGEFVAIMGASGSGKSTLMNILGCLDTPTGGRYLLDGEDVSTLNADELATLRRRTFGFVFQSYNLIPTSTAQENVEVPAIYAGTPAAERRKRAAALLNALKLGDRLDHRPSQLSGGQQQRISIARALMNGGRIILADEPTGALDSQSGEDVMELLRSMHQQGHTVIVITHAREVAERADRLIEIRDGQILSDTTKRDIHTPEATLQPHEEIAGNGAHIADISEAVKMALHALRANIFRTVLTLLGIIIGVSSVVTMLAIGTGAQNTILDRINAMGTDLILVRPAMAGFRGSGSIATLVPQDADAILELPNVKSAVPEVTGTVTLRRGNVDYQSQANGTVPAFSSEIVESRQRQLHHPERYRYLRPCGWLGTTVVKTLFPDGGNPVGDYILIQKIPFQIIGTLEPKGAGFGGSDQDDVVVVPLSTGNLRLFGQKYVRSITVQVKDSSLIDTTQNQIQSLLDQRHKKRDTMITNMSSVREDAAAMGKTMTVFLGSVAAISLLVGGIGVMNIMLVSVTERTREIGVRMATGARRRDILLQFIIEALSVSAIGGAIGVILGLGAAALASWAGLSVGYSFGPVLLAFACAFATGLIFGFLPARKASRLLPAVALSSE</sequence>
<name>MACB_BRUA2</name>
<organism>
    <name type="scientific">Brucella abortus (strain 2308)</name>
    <dbReference type="NCBI Taxonomy" id="359391"/>
    <lineage>
        <taxon>Bacteria</taxon>
        <taxon>Pseudomonadati</taxon>
        <taxon>Pseudomonadota</taxon>
        <taxon>Alphaproteobacteria</taxon>
        <taxon>Hyphomicrobiales</taxon>
        <taxon>Brucellaceae</taxon>
        <taxon>Brucella/Ochrobactrum group</taxon>
        <taxon>Brucella</taxon>
    </lineage>
</organism>
<dbReference type="EC" id="7.6.2.-" evidence="1"/>
<dbReference type="EMBL" id="AM040264">
    <property type="protein sequence ID" value="CAJ11639.1"/>
    <property type="status" value="ALT_SEQ"/>
    <property type="molecule type" value="Genomic_DNA"/>
</dbReference>
<dbReference type="EMBL" id="AM040264">
    <property type="protein sequence ID" value="CAJ11640.1"/>
    <property type="status" value="ALT_SEQ"/>
    <property type="molecule type" value="Genomic_DNA"/>
</dbReference>
<dbReference type="SMR" id="Q2YRG7"/>
<dbReference type="STRING" id="359391.BAB1_1684"/>
<dbReference type="KEGG" id="bmf:BAB1_1683"/>
<dbReference type="KEGG" id="bmf:BAB1_1684"/>
<dbReference type="HOGENOM" id="CLU_000604_8_5_5"/>
<dbReference type="Proteomes" id="UP000002719">
    <property type="component" value="Chromosome I"/>
</dbReference>
<dbReference type="GO" id="GO:0005886">
    <property type="term" value="C:plasma membrane"/>
    <property type="evidence" value="ECO:0007669"/>
    <property type="project" value="UniProtKB-SubCell"/>
</dbReference>
<dbReference type="GO" id="GO:0005524">
    <property type="term" value="F:ATP binding"/>
    <property type="evidence" value="ECO:0007669"/>
    <property type="project" value="UniProtKB-KW"/>
</dbReference>
<dbReference type="GO" id="GO:0016887">
    <property type="term" value="F:ATP hydrolysis activity"/>
    <property type="evidence" value="ECO:0007669"/>
    <property type="project" value="InterPro"/>
</dbReference>
<dbReference type="GO" id="GO:0022857">
    <property type="term" value="F:transmembrane transporter activity"/>
    <property type="evidence" value="ECO:0007669"/>
    <property type="project" value="TreeGrafter"/>
</dbReference>
<dbReference type="GO" id="GO:0046677">
    <property type="term" value="P:response to antibiotic"/>
    <property type="evidence" value="ECO:0007669"/>
    <property type="project" value="UniProtKB-KW"/>
</dbReference>
<dbReference type="CDD" id="cd03255">
    <property type="entry name" value="ABC_MJ0796_LolCDE_FtsE"/>
    <property type="match status" value="1"/>
</dbReference>
<dbReference type="FunFam" id="3.40.50.300:FF:000032">
    <property type="entry name" value="Export ABC transporter ATP-binding protein"/>
    <property type="match status" value="1"/>
</dbReference>
<dbReference type="Gene3D" id="3.40.50.300">
    <property type="entry name" value="P-loop containing nucleotide triphosphate hydrolases"/>
    <property type="match status" value="1"/>
</dbReference>
<dbReference type="InterPro" id="IPR003593">
    <property type="entry name" value="AAA+_ATPase"/>
</dbReference>
<dbReference type="InterPro" id="IPR003838">
    <property type="entry name" value="ABC3_permease_C"/>
</dbReference>
<dbReference type="InterPro" id="IPR003439">
    <property type="entry name" value="ABC_transporter-like_ATP-bd"/>
</dbReference>
<dbReference type="InterPro" id="IPR017871">
    <property type="entry name" value="ABC_transporter-like_CS"/>
</dbReference>
<dbReference type="InterPro" id="IPR017911">
    <property type="entry name" value="MacB-like_ATP-bd"/>
</dbReference>
<dbReference type="InterPro" id="IPR025857">
    <property type="entry name" value="MacB_PCD"/>
</dbReference>
<dbReference type="InterPro" id="IPR050250">
    <property type="entry name" value="Macrolide_Exporter_MacB"/>
</dbReference>
<dbReference type="InterPro" id="IPR027417">
    <property type="entry name" value="P-loop_NTPase"/>
</dbReference>
<dbReference type="PANTHER" id="PTHR30572:SF14">
    <property type="entry name" value="MACROLIDE EXPORT ATP-BINDING_PERMEASE PROTEIN MACB"/>
    <property type="match status" value="1"/>
</dbReference>
<dbReference type="PANTHER" id="PTHR30572">
    <property type="entry name" value="MEMBRANE COMPONENT OF TRANSPORTER-RELATED"/>
    <property type="match status" value="1"/>
</dbReference>
<dbReference type="Pfam" id="PF00005">
    <property type="entry name" value="ABC_tran"/>
    <property type="match status" value="1"/>
</dbReference>
<dbReference type="Pfam" id="PF02687">
    <property type="entry name" value="FtsX"/>
    <property type="match status" value="1"/>
</dbReference>
<dbReference type="Pfam" id="PF12704">
    <property type="entry name" value="MacB_PCD"/>
    <property type="match status" value="1"/>
</dbReference>
<dbReference type="SMART" id="SM00382">
    <property type="entry name" value="AAA"/>
    <property type="match status" value="1"/>
</dbReference>
<dbReference type="SUPFAM" id="SSF52540">
    <property type="entry name" value="P-loop containing nucleoside triphosphate hydrolases"/>
    <property type="match status" value="1"/>
</dbReference>
<dbReference type="PROSITE" id="PS00211">
    <property type="entry name" value="ABC_TRANSPORTER_1"/>
    <property type="match status" value="1"/>
</dbReference>
<dbReference type="PROSITE" id="PS50893">
    <property type="entry name" value="ABC_TRANSPORTER_2"/>
    <property type="match status" value="1"/>
</dbReference>
<dbReference type="PROSITE" id="PS51267">
    <property type="entry name" value="MACB"/>
    <property type="match status" value="1"/>
</dbReference>
<protein>
    <recommendedName>
        <fullName evidence="1">Macrolide export ATP-binding/permease protein MacB</fullName>
        <ecNumber evidence="1">7.6.2.-</ecNumber>
    </recommendedName>
</protein>
<accession>Q2YRG7</accession>
<accession>Q2YRG8</accession>
<proteinExistence type="inferred from homology"/>
<feature type="chain" id="PRO_0000269926" description="Macrolide export ATP-binding/permease protein MacB">
    <location>
        <begin position="1"/>
        <end position="646"/>
    </location>
</feature>
<feature type="transmembrane region" description="Helical" evidence="1">
    <location>
        <begin position="274"/>
        <end position="294"/>
    </location>
</feature>
<feature type="transmembrane region" description="Helical" evidence="1">
    <location>
        <begin position="528"/>
        <end position="548"/>
    </location>
</feature>
<feature type="transmembrane region" description="Helical" evidence="1">
    <location>
        <begin position="572"/>
        <end position="592"/>
    </location>
</feature>
<feature type="transmembrane region" description="Helical" evidence="1">
    <location>
        <begin position="609"/>
        <end position="629"/>
    </location>
</feature>
<feature type="domain" description="ABC transporter" evidence="1">
    <location>
        <begin position="7"/>
        <end position="245"/>
    </location>
</feature>
<feature type="binding site" evidence="1">
    <location>
        <begin position="43"/>
        <end position="50"/>
    </location>
    <ligand>
        <name>ATP</name>
        <dbReference type="ChEBI" id="CHEBI:30616"/>
    </ligand>
</feature>
<comment type="function">
    <text evidence="1">Non-canonical ABC transporter that contains transmembrane domains (TMD), which form a pore in the inner membrane, and an ATP-binding domain (NBD), which is responsible for energy generation. Confers resistance against macrolides.</text>
</comment>
<comment type="subunit">
    <text evidence="1">Homodimer.</text>
</comment>
<comment type="subcellular location">
    <subcellularLocation>
        <location evidence="1">Cell inner membrane</location>
        <topology evidence="1">Multi-pass membrane protein</topology>
    </subcellularLocation>
</comment>
<comment type="similarity">
    <text evidence="1">Belongs to the ABC transporter superfamily. Macrolide exporter (TC 3.A.1.122) family.</text>
</comment>
<comment type="sequence caution" evidence="2">
    <conflict type="frameshift">
        <sequence resource="EMBL-CDS" id="CAJ11639"/>
    </conflict>
    <text>Produces two separate ORFs.</text>
</comment>
<comment type="sequence caution" evidence="2">
    <conflict type="frameshift">
        <sequence resource="EMBL-CDS" id="CAJ11640"/>
    </conflict>
    <text>Produces two separate ORFs.</text>
</comment>